<reference key="1">
    <citation type="journal article" date="2003" name="Proc. Natl. Acad. Sci. U.S.A.">
        <title>Complete genome sequence of the Q-fever pathogen, Coxiella burnetii.</title>
        <authorList>
            <person name="Seshadri R."/>
            <person name="Paulsen I.T."/>
            <person name="Eisen J.A."/>
            <person name="Read T.D."/>
            <person name="Nelson K.E."/>
            <person name="Nelson W.C."/>
            <person name="Ward N.L."/>
            <person name="Tettelin H."/>
            <person name="Davidsen T.M."/>
            <person name="Beanan M.J."/>
            <person name="DeBoy R.T."/>
            <person name="Daugherty S.C."/>
            <person name="Brinkac L.M."/>
            <person name="Madupu R."/>
            <person name="Dodson R.J."/>
            <person name="Khouri H.M."/>
            <person name="Lee K.H."/>
            <person name="Carty H.A."/>
            <person name="Scanlan D."/>
            <person name="Heinzen R.A."/>
            <person name="Thompson H.A."/>
            <person name="Samuel J.E."/>
            <person name="Fraser C.M."/>
            <person name="Heidelberg J.F."/>
        </authorList>
    </citation>
    <scope>NUCLEOTIDE SEQUENCE [LARGE SCALE GENOMIC DNA]</scope>
    <source>
        <strain>RSA 493 / Nine Mile phase I</strain>
    </source>
</reference>
<evidence type="ECO:0000255" key="1">
    <source>
        <dbReference type="HAMAP-Rule" id="MF_00627"/>
    </source>
</evidence>
<proteinExistence type="inferred from homology"/>
<gene>
    <name evidence="1" type="primary">tdh</name>
    <name type="ordered locus">CBU_0112</name>
</gene>
<accession>Q83F39</accession>
<name>TDH_COXBU</name>
<keyword id="KW-0963">Cytoplasm</keyword>
<keyword id="KW-0479">Metal-binding</keyword>
<keyword id="KW-0520">NAD</keyword>
<keyword id="KW-0560">Oxidoreductase</keyword>
<keyword id="KW-1185">Reference proteome</keyword>
<keyword id="KW-0862">Zinc</keyword>
<organism>
    <name type="scientific">Coxiella burnetii (strain RSA 493 / Nine Mile phase I)</name>
    <dbReference type="NCBI Taxonomy" id="227377"/>
    <lineage>
        <taxon>Bacteria</taxon>
        <taxon>Pseudomonadati</taxon>
        <taxon>Pseudomonadota</taxon>
        <taxon>Gammaproteobacteria</taxon>
        <taxon>Legionellales</taxon>
        <taxon>Coxiellaceae</taxon>
        <taxon>Coxiella</taxon>
    </lineage>
</organism>
<sequence length="342" mass="37194">MKVLSKLKPAPGLWLHKAPTPKPGRDEVLIKIKKTAICGTDLHIYKWDEWAQKTIPVPMHVGHEFVGEIVEVGEAASALAVGDRVSGEGHITCGDCRNCRAGKRHLCRYTVGVGVNRPGAFAEYLVIPAKNAYKIPAKISDDIAAILDPFGNAAHSALEFDLVGEDVLITGAGPVGLMSAAIARHVGARHVVITDVNDYRLALAEKVGVTAAVNSTKTPLTETMKNLGMTEGFDVGLEMSGNAEAFRSMLTVMNNGGKIAFLGIPPEPFAIDWNQVVFKSLLIKGIYGRRMFETWYKMTNLLLSGLDISPIITHEFPMKDFQQAFDVMLSGKTGKVILNWEQ</sequence>
<protein>
    <recommendedName>
        <fullName evidence="1">L-threonine 3-dehydrogenase</fullName>
        <shortName evidence="1">TDH</shortName>
        <ecNumber evidence="1">1.1.1.103</ecNumber>
    </recommendedName>
</protein>
<feature type="chain" id="PRO_0000160835" description="L-threonine 3-dehydrogenase">
    <location>
        <begin position="1"/>
        <end position="342"/>
    </location>
</feature>
<feature type="active site" description="Charge relay system" evidence="1">
    <location>
        <position position="40"/>
    </location>
</feature>
<feature type="active site" description="Charge relay system" evidence="1">
    <location>
        <position position="43"/>
    </location>
</feature>
<feature type="binding site" evidence="1">
    <location>
        <position position="38"/>
    </location>
    <ligand>
        <name>Zn(2+)</name>
        <dbReference type="ChEBI" id="CHEBI:29105"/>
        <label>1</label>
        <note>catalytic</note>
    </ligand>
</feature>
<feature type="binding site" evidence="1">
    <location>
        <position position="63"/>
    </location>
    <ligand>
        <name>Zn(2+)</name>
        <dbReference type="ChEBI" id="CHEBI:29105"/>
        <label>1</label>
        <note>catalytic</note>
    </ligand>
</feature>
<feature type="binding site" evidence="1">
    <location>
        <position position="64"/>
    </location>
    <ligand>
        <name>Zn(2+)</name>
        <dbReference type="ChEBI" id="CHEBI:29105"/>
        <label>1</label>
        <note>catalytic</note>
    </ligand>
</feature>
<feature type="binding site" evidence="1">
    <location>
        <position position="93"/>
    </location>
    <ligand>
        <name>Zn(2+)</name>
        <dbReference type="ChEBI" id="CHEBI:29105"/>
        <label>2</label>
    </ligand>
</feature>
<feature type="binding site" evidence="1">
    <location>
        <position position="96"/>
    </location>
    <ligand>
        <name>Zn(2+)</name>
        <dbReference type="ChEBI" id="CHEBI:29105"/>
        <label>2</label>
    </ligand>
</feature>
<feature type="binding site" evidence="1">
    <location>
        <position position="99"/>
    </location>
    <ligand>
        <name>Zn(2+)</name>
        <dbReference type="ChEBI" id="CHEBI:29105"/>
        <label>2</label>
    </ligand>
</feature>
<feature type="binding site" evidence="1">
    <location>
        <position position="107"/>
    </location>
    <ligand>
        <name>Zn(2+)</name>
        <dbReference type="ChEBI" id="CHEBI:29105"/>
        <label>2</label>
    </ligand>
</feature>
<feature type="binding site" evidence="1">
    <location>
        <position position="175"/>
    </location>
    <ligand>
        <name>NAD(+)</name>
        <dbReference type="ChEBI" id="CHEBI:57540"/>
    </ligand>
</feature>
<feature type="binding site" evidence="1">
    <location>
        <position position="195"/>
    </location>
    <ligand>
        <name>NAD(+)</name>
        <dbReference type="ChEBI" id="CHEBI:57540"/>
    </ligand>
</feature>
<feature type="binding site" evidence="1">
    <location>
        <position position="200"/>
    </location>
    <ligand>
        <name>NAD(+)</name>
        <dbReference type="ChEBI" id="CHEBI:57540"/>
    </ligand>
</feature>
<feature type="binding site" evidence="1">
    <location>
        <begin position="262"/>
        <end position="264"/>
    </location>
    <ligand>
        <name>NAD(+)</name>
        <dbReference type="ChEBI" id="CHEBI:57540"/>
    </ligand>
</feature>
<feature type="binding site" evidence="1">
    <location>
        <begin position="286"/>
        <end position="287"/>
    </location>
    <ligand>
        <name>NAD(+)</name>
        <dbReference type="ChEBI" id="CHEBI:57540"/>
    </ligand>
</feature>
<feature type="site" description="Important for catalytic activity for the proton relay mechanism but does not participate directly in the coordination of zinc atom" evidence="1">
    <location>
        <position position="148"/>
    </location>
</feature>
<comment type="function">
    <text evidence="1">Catalyzes the NAD(+)-dependent oxidation of L-threonine to 2-amino-3-ketobutyrate.</text>
</comment>
<comment type="catalytic activity">
    <reaction evidence="1">
        <text>L-threonine + NAD(+) = (2S)-2-amino-3-oxobutanoate + NADH + H(+)</text>
        <dbReference type="Rhea" id="RHEA:13161"/>
        <dbReference type="ChEBI" id="CHEBI:15378"/>
        <dbReference type="ChEBI" id="CHEBI:57540"/>
        <dbReference type="ChEBI" id="CHEBI:57926"/>
        <dbReference type="ChEBI" id="CHEBI:57945"/>
        <dbReference type="ChEBI" id="CHEBI:78948"/>
        <dbReference type="EC" id="1.1.1.103"/>
    </reaction>
</comment>
<comment type="cofactor">
    <cofactor evidence="1">
        <name>Zn(2+)</name>
        <dbReference type="ChEBI" id="CHEBI:29105"/>
    </cofactor>
    <text evidence="1">Binds 2 Zn(2+) ions per subunit.</text>
</comment>
<comment type="pathway">
    <text evidence="1">Amino-acid degradation; L-threonine degradation via oxydo-reductase pathway; glycine from L-threonine: step 1/2.</text>
</comment>
<comment type="subunit">
    <text evidence="1">Homotetramer.</text>
</comment>
<comment type="subcellular location">
    <subcellularLocation>
        <location evidence="1">Cytoplasm</location>
    </subcellularLocation>
</comment>
<comment type="similarity">
    <text evidence="1">Belongs to the zinc-containing alcohol dehydrogenase family.</text>
</comment>
<dbReference type="EC" id="1.1.1.103" evidence="1"/>
<dbReference type="EMBL" id="AE016828">
    <property type="protein sequence ID" value="AAO89676.1"/>
    <property type="molecule type" value="Genomic_DNA"/>
</dbReference>
<dbReference type="RefSeq" id="NP_819162.1">
    <property type="nucleotide sequence ID" value="NC_002971.4"/>
</dbReference>
<dbReference type="RefSeq" id="WP_005769439.1">
    <property type="nucleotide sequence ID" value="NZ_CDBG01000001.1"/>
</dbReference>
<dbReference type="SMR" id="Q83F39"/>
<dbReference type="STRING" id="227377.CBU_0112"/>
<dbReference type="DNASU" id="1207983"/>
<dbReference type="EnsemblBacteria" id="AAO89676">
    <property type="protein sequence ID" value="AAO89676"/>
    <property type="gene ID" value="CBU_0112"/>
</dbReference>
<dbReference type="GeneID" id="1207983"/>
<dbReference type="KEGG" id="cbu:CBU_0112"/>
<dbReference type="PATRIC" id="fig|227377.7.peg.115"/>
<dbReference type="eggNOG" id="COG1063">
    <property type="taxonomic scope" value="Bacteria"/>
</dbReference>
<dbReference type="HOGENOM" id="CLU_026673_11_0_6"/>
<dbReference type="OrthoDB" id="9773078at2"/>
<dbReference type="UniPathway" id="UPA00046">
    <property type="reaction ID" value="UER00505"/>
</dbReference>
<dbReference type="Proteomes" id="UP000002671">
    <property type="component" value="Chromosome"/>
</dbReference>
<dbReference type="GO" id="GO:0005737">
    <property type="term" value="C:cytoplasm"/>
    <property type="evidence" value="ECO:0007669"/>
    <property type="project" value="UniProtKB-SubCell"/>
</dbReference>
<dbReference type="GO" id="GO:0008743">
    <property type="term" value="F:L-threonine 3-dehydrogenase activity"/>
    <property type="evidence" value="ECO:0007669"/>
    <property type="project" value="UniProtKB-UniRule"/>
</dbReference>
<dbReference type="GO" id="GO:0008270">
    <property type="term" value="F:zinc ion binding"/>
    <property type="evidence" value="ECO:0007669"/>
    <property type="project" value="UniProtKB-UniRule"/>
</dbReference>
<dbReference type="GO" id="GO:0019518">
    <property type="term" value="P:L-threonine catabolic process to glycine"/>
    <property type="evidence" value="ECO:0007669"/>
    <property type="project" value="UniProtKB-UniPathway"/>
</dbReference>
<dbReference type="Gene3D" id="3.90.180.10">
    <property type="entry name" value="Medium-chain alcohol dehydrogenases, catalytic domain"/>
    <property type="match status" value="1"/>
</dbReference>
<dbReference type="Gene3D" id="3.40.50.720">
    <property type="entry name" value="NAD(P)-binding Rossmann-like Domain"/>
    <property type="match status" value="1"/>
</dbReference>
<dbReference type="HAMAP" id="MF_00627">
    <property type="entry name" value="Thr_dehydrog"/>
    <property type="match status" value="1"/>
</dbReference>
<dbReference type="InterPro" id="IPR013149">
    <property type="entry name" value="ADH-like_C"/>
</dbReference>
<dbReference type="InterPro" id="IPR013154">
    <property type="entry name" value="ADH-like_N"/>
</dbReference>
<dbReference type="InterPro" id="IPR002328">
    <property type="entry name" value="ADH_Zn_CS"/>
</dbReference>
<dbReference type="InterPro" id="IPR011032">
    <property type="entry name" value="GroES-like_sf"/>
</dbReference>
<dbReference type="InterPro" id="IPR004627">
    <property type="entry name" value="L-Threonine_3-DHase"/>
</dbReference>
<dbReference type="InterPro" id="IPR036291">
    <property type="entry name" value="NAD(P)-bd_dom_sf"/>
</dbReference>
<dbReference type="InterPro" id="IPR020843">
    <property type="entry name" value="PKS_ER"/>
</dbReference>
<dbReference type="InterPro" id="IPR050129">
    <property type="entry name" value="Zn_alcohol_dh"/>
</dbReference>
<dbReference type="NCBIfam" id="NF003808">
    <property type="entry name" value="PRK05396.1"/>
    <property type="match status" value="1"/>
</dbReference>
<dbReference type="NCBIfam" id="TIGR00692">
    <property type="entry name" value="tdh"/>
    <property type="match status" value="1"/>
</dbReference>
<dbReference type="PANTHER" id="PTHR43401">
    <property type="entry name" value="L-THREONINE 3-DEHYDROGENASE"/>
    <property type="match status" value="1"/>
</dbReference>
<dbReference type="PANTHER" id="PTHR43401:SF2">
    <property type="entry name" value="L-THREONINE 3-DEHYDROGENASE"/>
    <property type="match status" value="1"/>
</dbReference>
<dbReference type="Pfam" id="PF08240">
    <property type="entry name" value="ADH_N"/>
    <property type="match status" value="1"/>
</dbReference>
<dbReference type="Pfam" id="PF00107">
    <property type="entry name" value="ADH_zinc_N"/>
    <property type="match status" value="1"/>
</dbReference>
<dbReference type="SMART" id="SM00829">
    <property type="entry name" value="PKS_ER"/>
    <property type="match status" value="1"/>
</dbReference>
<dbReference type="SUPFAM" id="SSF50129">
    <property type="entry name" value="GroES-like"/>
    <property type="match status" value="1"/>
</dbReference>
<dbReference type="SUPFAM" id="SSF51735">
    <property type="entry name" value="NAD(P)-binding Rossmann-fold domains"/>
    <property type="match status" value="1"/>
</dbReference>
<dbReference type="PROSITE" id="PS00059">
    <property type="entry name" value="ADH_ZINC"/>
    <property type="match status" value="1"/>
</dbReference>